<dbReference type="EMBL" id="AY534621">
    <property type="protein sequence ID" value="AAS48105.1"/>
    <property type="molecule type" value="mRNA"/>
</dbReference>
<dbReference type="SMR" id="Q6QLW4"/>
<dbReference type="GO" id="GO:0005758">
    <property type="term" value="C:mitochondrial intermembrane space"/>
    <property type="evidence" value="ECO:0007669"/>
    <property type="project" value="UniProtKB-SubCell"/>
</dbReference>
<dbReference type="GO" id="GO:0009055">
    <property type="term" value="F:electron transfer activity"/>
    <property type="evidence" value="ECO:0007669"/>
    <property type="project" value="InterPro"/>
</dbReference>
<dbReference type="GO" id="GO:0020037">
    <property type="term" value="F:heme binding"/>
    <property type="evidence" value="ECO:0007669"/>
    <property type="project" value="InterPro"/>
</dbReference>
<dbReference type="GO" id="GO:0046872">
    <property type="term" value="F:metal ion binding"/>
    <property type="evidence" value="ECO:0007669"/>
    <property type="project" value="UniProtKB-KW"/>
</dbReference>
<dbReference type="FunFam" id="1.10.760.10:FF:000001">
    <property type="entry name" value="Cytochrome c iso-1"/>
    <property type="match status" value="1"/>
</dbReference>
<dbReference type="Gene3D" id="1.10.760.10">
    <property type="entry name" value="Cytochrome c-like domain"/>
    <property type="match status" value="1"/>
</dbReference>
<dbReference type="InterPro" id="IPR009056">
    <property type="entry name" value="Cyt_c-like_dom"/>
</dbReference>
<dbReference type="InterPro" id="IPR036909">
    <property type="entry name" value="Cyt_c-like_dom_sf"/>
</dbReference>
<dbReference type="InterPro" id="IPR002327">
    <property type="entry name" value="Cyt_c_1A/1B"/>
</dbReference>
<dbReference type="PANTHER" id="PTHR11961">
    <property type="entry name" value="CYTOCHROME C"/>
    <property type="match status" value="1"/>
</dbReference>
<dbReference type="Pfam" id="PF00034">
    <property type="entry name" value="Cytochrom_C"/>
    <property type="match status" value="1"/>
</dbReference>
<dbReference type="PRINTS" id="PR00604">
    <property type="entry name" value="CYTCHRMECIAB"/>
</dbReference>
<dbReference type="SUPFAM" id="SSF46626">
    <property type="entry name" value="Cytochrome c"/>
    <property type="match status" value="1"/>
</dbReference>
<dbReference type="PROSITE" id="PS51007">
    <property type="entry name" value="CYTC"/>
    <property type="match status" value="1"/>
</dbReference>
<comment type="function">
    <text evidence="1">Electron carrier protein. The oxidized form of the cytochrome c heme group can accept an electron from the heme group of the cytochrome c1 subunit of cytochrome reductase. Cytochrome c then transfers this electron to the cytochrome oxidase complex, the final protein carrier in the mitochondrial electron-transport chain (By similarity).</text>
</comment>
<comment type="subcellular location">
    <subcellularLocation>
        <location evidence="1">Mitochondrion intermembrane space</location>
    </subcellularLocation>
    <text evidence="1">Loosely associated with the inner membrane.</text>
</comment>
<comment type="PTM">
    <text evidence="1">Binds 1 heme c group covalently per subunit.</text>
</comment>
<comment type="similarity">
    <text evidence="3">Belongs to the cytochrome c family.</text>
</comment>
<comment type="online information" name="Protein Spotlight">
    <link uri="https://www.proteinspotlight.org/back_issues/076"/>
    <text>Life shuttle - Issue 76 of November 2006</text>
</comment>
<name>CYC_PECGU</name>
<reference key="1">
    <citation type="submission" date="2004-01" db="EMBL/GenBank/DDBJ databases">
        <title>Pectinaria gouldii cytochrome c protein mRNA.</title>
        <authorList>
            <person name="Watson A.M."/>
            <person name="Briggs D.T."/>
            <person name="Edwards H.D."/>
            <person name="Dean M."/>
            <person name="Tauer T.J."/>
        </authorList>
    </citation>
    <scope>NUCLEOTIDE SEQUENCE [MRNA]</scope>
</reference>
<accession>Q6QLW4</accession>
<sequence>MADIPAGDAAKGKKVFVQRCAQCHTVEAGGKHKTGPNLSGLFGRKTGQAPGFSYTDANKNKGITWGKDTLWVYLENPKKYIPGTKMIFAGLKKKNERADLIAYLEESTK</sequence>
<feature type="chain" id="PRO_0000108278" description="Cytochrome c">
    <location>
        <begin position="1"/>
        <end position="109"/>
    </location>
</feature>
<feature type="binding site" description="covalent" evidence="2">
    <location>
        <position position="20"/>
    </location>
    <ligand>
        <name>heme c</name>
        <dbReference type="ChEBI" id="CHEBI:61717"/>
    </ligand>
</feature>
<feature type="binding site" description="covalent" evidence="2">
    <location>
        <position position="23"/>
    </location>
    <ligand>
        <name>heme c</name>
        <dbReference type="ChEBI" id="CHEBI:61717"/>
    </ligand>
</feature>
<feature type="binding site" description="axial binding residue" evidence="2">
    <location>
        <position position="24"/>
    </location>
    <ligand>
        <name>heme c</name>
        <dbReference type="ChEBI" id="CHEBI:61717"/>
    </ligand>
    <ligandPart>
        <name>Fe</name>
        <dbReference type="ChEBI" id="CHEBI:18248"/>
    </ligandPart>
</feature>
<feature type="binding site" description="axial binding residue" evidence="2">
    <location>
        <position position="86"/>
    </location>
    <ligand>
        <name>heme c</name>
        <dbReference type="ChEBI" id="CHEBI:61717"/>
    </ligand>
    <ligandPart>
        <name>Fe</name>
        <dbReference type="ChEBI" id="CHEBI:18248"/>
    </ligandPart>
</feature>
<organism>
    <name type="scientific">Pectinaria gouldii</name>
    <name type="common">Trumpet worm</name>
    <name type="synonym">Ice-cream cone worm</name>
    <dbReference type="NCBI Taxonomy" id="260746"/>
    <lineage>
        <taxon>Eukaryota</taxon>
        <taxon>Metazoa</taxon>
        <taxon>Spiralia</taxon>
        <taxon>Lophotrochozoa</taxon>
        <taxon>Annelida</taxon>
        <taxon>Polychaeta</taxon>
        <taxon>Sedentaria</taxon>
        <taxon>Canalipalpata</taxon>
        <taxon>Terebellida</taxon>
        <taxon>Terebelliformia</taxon>
        <taxon>Pectinariidae</taxon>
        <taxon>Pectinaria</taxon>
    </lineage>
</organism>
<protein>
    <recommendedName>
        <fullName>Cytochrome c</fullName>
    </recommendedName>
</protein>
<keyword id="KW-0249">Electron transport</keyword>
<keyword id="KW-0349">Heme</keyword>
<keyword id="KW-0408">Iron</keyword>
<keyword id="KW-0479">Metal-binding</keyword>
<keyword id="KW-0496">Mitochondrion</keyword>
<keyword id="KW-0679">Respiratory chain</keyword>
<keyword id="KW-0813">Transport</keyword>
<evidence type="ECO:0000250" key="1"/>
<evidence type="ECO:0000255" key="2">
    <source>
        <dbReference type="PROSITE-ProRule" id="PRU00433"/>
    </source>
</evidence>
<evidence type="ECO:0000305" key="3"/>
<proteinExistence type="inferred from homology"/>